<keyword id="KW-0521">NADP</keyword>
<keyword id="KW-0547">Nucleotide-binding</keyword>
<keyword id="KW-0560">Oxidoreductase</keyword>
<keyword id="KW-1185">Reference proteome</keyword>
<organism>
    <name type="scientific">Trichoderma harzianum</name>
    <name type="common">Hypocrea lixii</name>
    <dbReference type="NCBI Taxonomy" id="5544"/>
    <lineage>
        <taxon>Eukaryota</taxon>
        <taxon>Fungi</taxon>
        <taxon>Dikarya</taxon>
        <taxon>Ascomycota</taxon>
        <taxon>Pezizomycotina</taxon>
        <taxon>Sordariomycetes</taxon>
        <taxon>Hypocreomycetidae</taxon>
        <taxon>Hypocreales</taxon>
        <taxon>Hypocreaceae</taxon>
        <taxon>Trichoderma</taxon>
    </lineage>
</organism>
<name>THNE_TRIHA</name>
<reference key="1">
    <citation type="journal article" date="2015" name="Genome Announc.">
        <title>Draft whole-genome sequence of the biocontrol agent Trichoderma harzianum T6776.</title>
        <authorList>
            <person name="Baroncelli R."/>
            <person name="Piaggeschi G."/>
            <person name="Fiorini L."/>
            <person name="Bertolini E."/>
            <person name="Zapparata A."/>
            <person name="Pe M.E."/>
            <person name="Sarrocco S."/>
            <person name="Vannacci G."/>
        </authorList>
    </citation>
    <scope>NUCLEOTIDE SEQUENCE [LARGE SCALE GENOMIC DNA]</scope>
    <source>
        <strain>T6776</strain>
    </source>
</reference>
<reference key="2">
    <citation type="journal article" date="2021" name="Org. Biomol. Chem.">
        <title>Genome mining of cryptic tetronate natural products from a PKS-NRPS encoding gene cluster in Trichoderma harzianum t-22.</title>
        <authorList>
            <person name="Zhu Y."/>
            <person name="Wang J."/>
            <person name="Mou P."/>
            <person name="Yan Y."/>
            <person name="Chen M."/>
            <person name="Tang Y."/>
        </authorList>
    </citation>
    <scope>FUNCTION</scope>
    <scope>CATALYTIC ACTIVITY</scope>
    <scope>PATHWAY</scope>
</reference>
<comment type="function">
    <text evidence="3">Trans-enoyl reductase; part of the gene cluster that produces the tetronate natural products trihazones (PubMed:33570538). The PKS-NRPS synthetase thnA with the help of the trans-enoyl reductase thnE are responsible for the synthesis of the carboxylmethyl containing trihazone A (PubMed:33570538). The PKS portion of thnA synthesizes beta-keto-triene chain from one acetyl-CoA and 6 equivalents of malonyl-CoA, in collaboration with thnE, which selectively reduces the enoyl intermediate during the first and fourth iteration of the PKS (PubMed:33570538). The NRPS domain selects and activates malate, of which the alpha-hydroxyl group attacks the completed polyketide acyl-S-ACP chain to form the ester product (PubMed:33570538). Intramolecular Dieckmann cyclization catalyzed by the terminal reductase domain releases the product as trihazone A from the PKS-NPRS (PubMed:33570538). The pathway begins with the formation of trihazone A by the hybrid PKS-NRPS synthetase thnA and the trans-enoyl reductase thnE. Trihazone A is further decarboxylated by the 2-oxoglutarate-dependent dioxygenase thnC to produce trihazone D. The function of the FAD-dependent monooxygenase thnD has still to be identified (PubMed:33570538).</text>
</comment>
<comment type="catalytic activity">
    <reaction evidence="3">
        <text>malate + 6 malonyl-CoA + acetyl-CoA + 2 AH2 + 2 S-adenosyl-L-methionine + 5 NADPH + 9 H(+) = trihazone A + 2 A + 2 S-adenosyl-L-homocysteine + 6 CO2 + 5 NADP(+) + 7 CoA + 6 H2O</text>
        <dbReference type="Rhea" id="RHEA:72015"/>
        <dbReference type="ChEBI" id="CHEBI:13193"/>
        <dbReference type="ChEBI" id="CHEBI:15377"/>
        <dbReference type="ChEBI" id="CHEBI:15378"/>
        <dbReference type="ChEBI" id="CHEBI:15595"/>
        <dbReference type="ChEBI" id="CHEBI:16526"/>
        <dbReference type="ChEBI" id="CHEBI:17499"/>
        <dbReference type="ChEBI" id="CHEBI:57287"/>
        <dbReference type="ChEBI" id="CHEBI:57288"/>
        <dbReference type="ChEBI" id="CHEBI:57384"/>
        <dbReference type="ChEBI" id="CHEBI:57783"/>
        <dbReference type="ChEBI" id="CHEBI:57856"/>
        <dbReference type="ChEBI" id="CHEBI:58349"/>
        <dbReference type="ChEBI" id="CHEBI:59789"/>
        <dbReference type="ChEBI" id="CHEBI:190400"/>
    </reaction>
    <physiologicalReaction direction="left-to-right" evidence="3">
        <dbReference type="Rhea" id="RHEA:72016"/>
    </physiologicalReaction>
</comment>
<comment type="pathway">
    <text evidence="3">Secondary metabolite biosynthesis.</text>
</comment>
<comment type="subunit">
    <text evidence="1">Monomer.</text>
</comment>
<comment type="similarity">
    <text evidence="5">Belongs to the zinc-containing alcohol dehydrogenase family.</text>
</comment>
<sequence length="368" mass="38776">MSSATTMGQLPQHQTAIVAQGPGQMTIQKDAPVPALAHDMVLVKTATVAINPVDVKSLDYSPAPGAIIGFDFAGTIVALGSDAVKEGRLAVGDRVAGVVYGMDRLQPDVGAFAQYVGALADLVLKLPDHISLEDAAALGLATATAAYGLFKEMELPGALDRLSSSVPDRGDFVLVAGGSTATGTRAIELLKTAGFRPVATSSPSNFELVKKFGAEAVFDYHDPGCADAIKAYTNNELDYALDCIAEAETTQLCYAAIGRAGGRYVAVEPFRESIAQSRINTVKASWFNVMTVWGRKVELGGEYAREASLEDREFGARSFAAVQALLDRGYVTTHPIKLMSGGWEGVVEGVAKIRSQPPSGYKLVCQVA</sequence>
<feature type="chain" id="PRO_0000455680" description="Trans-enoyl reductase thnE">
    <location>
        <begin position="1"/>
        <end position="368"/>
    </location>
</feature>
<feature type="binding site" evidence="1">
    <location>
        <begin position="53"/>
        <end position="56"/>
    </location>
    <ligand>
        <name>NADP(+)</name>
        <dbReference type="ChEBI" id="CHEBI:58349"/>
    </ligand>
</feature>
<feature type="binding site" evidence="2">
    <location>
        <begin position="140"/>
        <end position="147"/>
    </location>
    <ligand>
        <name>substrate</name>
    </ligand>
</feature>
<feature type="binding site" evidence="1">
    <location>
        <begin position="179"/>
        <end position="182"/>
    </location>
    <ligand>
        <name>NADP(+)</name>
        <dbReference type="ChEBI" id="CHEBI:58349"/>
    </ligand>
</feature>
<feature type="binding site" evidence="1">
    <location>
        <begin position="202"/>
        <end position="205"/>
    </location>
    <ligand>
        <name>NADP(+)</name>
        <dbReference type="ChEBI" id="CHEBI:58349"/>
    </ligand>
</feature>
<feature type="binding site" evidence="1">
    <location>
        <position position="220"/>
    </location>
    <ligand>
        <name>NADP(+)</name>
        <dbReference type="ChEBI" id="CHEBI:58349"/>
    </ligand>
</feature>
<feature type="binding site" evidence="1">
    <location>
        <begin position="267"/>
        <end position="268"/>
    </location>
    <ligand>
        <name>NADP(+)</name>
        <dbReference type="ChEBI" id="CHEBI:58349"/>
    </ligand>
</feature>
<feature type="binding site" evidence="2">
    <location>
        <begin position="289"/>
        <end position="293"/>
    </location>
    <ligand>
        <name>substrate</name>
    </ligand>
</feature>
<feature type="binding site" evidence="1">
    <location>
        <begin position="358"/>
        <end position="359"/>
    </location>
    <ligand>
        <name>NADP(+)</name>
        <dbReference type="ChEBI" id="CHEBI:58349"/>
    </ligand>
</feature>
<accession>A0A0F9XJT1</accession>
<gene>
    <name evidence="4" type="primary">thnE</name>
    <name type="ORF">THAR02_03175</name>
</gene>
<proteinExistence type="evidence at protein level"/>
<dbReference type="EC" id="1.-.-.-" evidence="3"/>
<dbReference type="EMBL" id="JOKZ01000069">
    <property type="protein sequence ID" value="KKP04695.1"/>
    <property type="molecule type" value="Genomic_DNA"/>
</dbReference>
<dbReference type="SMR" id="A0A0F9XJT1"/>
<dbReference type="OMA" id="THPARVM"/>
<dbReference type="OrthoDB" id="48317at2759"/>
<dbReference type="Proteomes" id="UP000034112">
    <property type="component" value="Unassembled WGS sequence"/>
</dbReference>
<dbReference type="GO" id="GO:0000166">
    <property type="term" value="F:nucleotide binding"/>
    <property type="evidence" value="ECO:0007669"/>
    <property type="project" value="UniProtKB-KW"/>
</dbReference>
<dbReference type="GO" id="GO:0016651">
    <property type="term" value="F:oxidoreductase activity, acting on NAD(P)H"/>
    <property type="evidence" value="ECO:0007669"/>
    <property type="project" value="InterPro"/>
</dbReference>
<dbReference type="CDD" id="cd08249">
    <property type="entry name" value="enoyl_reductase_like"/>
    <property type="match status" value="1"/>
</dbReference>
<dbReference type="Gene3D" id="3.90.180.10">
    <property type="entry name" value="Medium-chain alcohol dehydrogenases, catalytic domain"/>
    <property type="match status" value="1"/>
</dbReference>
<dbReference type="Gene3D" id="3.40.50.720">
    <property type="entry name" value="NAD(P)-binding Rossmann-like Domain"/>
    <property type="match status" value="1"/>
</dbReference>
<dbReference type="InterPro" id="IPR013149">
    <property type="entry name" value="ADH-like_C"/>
</dbReference>
<dbReference type="InterPro" id="IPR013154">
    <property type="entry name" value="ADH-like_N"/>
</dbReference>
<dbReference type="InterPro" id="IPR011032">
    <property type="entry name" value="GroES-like_sf"/>
</dbReference>
<dbReference type="InterPro" id="IPR036291">
    <property type="entry name" value="NAD(P)-bd_dom_sf"/>
</dbReference>
<dbReference type="InterPro" id="IPR020843">
    <property type="entry name" value="PKS_ER"/>
</dbReference>
<dbReference type="InterPro" id="IPR047122">
    <property type="entry name" value="Trans-enoyl_RdTase-like"/>
</dbReference>
<dbReference type="PANTHER" id="PTHR45348">
    <property type="entry name" value="HYPOTHETICAL OXIDOREDUCTASE (EUROFUNG)"/>
    <property type="match status" value="1"/>
</dbReference>
<dbReference type="PANTHER" id="PTHR45348:SF1">
    <property type="entry name" value="TRANS-ENOYL REDUCTASE STHE"/>
    <property type="match status" value="1"/>
</dbReference>
<dbReference type="Pfam" id="PF08240">
    <property type="entry name" value="ADH_N"/>
    <property type="match status" value="1"/>
</dbReference>
<dbReference type="Pfam" id="PF00107">
    <property type="entry name" value="ADH_zinc_N"/>
    <property type="match status" value="1"/>
</dbReference>
<dbReference type="SMART" id="SM00829">
    <property type="entry name" value="PKS_ER"/>
    <property type="match status" value="1"/>
</dbReference>
<dbReference type="SUPFAM" id="SSF50129">
    <property type="entry name" value="GroES-like"/>
    <property type="match status" value="1"/>
</dbReference>
<dbReference type="SUPFAM" id="SSF51735">
    <property type="entry name" value="NAD(P)-binding Rossmann-fold domains"/>
    <property type="match status" value="1"/>
</dbReference>
<protein>
    <recommendedName>
        <fullName evidence="4">Trans-enoyl reductase thnE</fullName>
        <ecNumber evidence="3">1.-.-.-</ecNumber>
    </recommendedName>
    <alternativeName>
        <fullName evidence="4">Trihazone biosynthesis cluster protein E</fullName>
    </alternativeName>
</protein>
<evidence type="ECO:0000250" key="1">
    <source>
        <dbReference type="UniProtKB" id="Q9Y7D0"/>
    </source>
</evidence>
<evidence type="ECO:0000255" key="2"/>
<evidence type="ECO:0000269" key="3">
    <source>
    </source>
</evidence>
<evidence type="ECO:0000303" key="4">
    <source>
    </source>
</evidence>
<evidence type="ECO:0000305" key="5"/>